<protein>
    <recommendedName>
        <fullName evidence="1">Ribonuclease P protein component</fullName>
        <shortName evidence="1">RNase P protein</shortName>
        <shortName evidence="1">RNaseP protein</shortName>
        <ecNumber evidence="1">3.1.26.5</ecNumber>
    </recommendedName>
    <alternativeName>
        <fullName evidence="1">Protein C5</fullName>
    </alternativeName>
</protein>
<name>RNPA_MYCBO</name>
<proteinExistence type="inferred from homology"/>
<evidence type="ECO:0000255" key="1">
    <source>
        <dbReference type="HAMAP-Rule" id="MF_00227"/>
    </source>
</evidence>
<evidence type="ECO:0000305" key="2"/>
<comment type="function">
    <text evidence="1">RNaseP catalyzes the removal of the 5'-leader sequence from pre-tRNA to produce the mature 5'-terminus. It can also cleave other RNA substrates such as 4.5S RNA. The protein component plays an auxiliary but essential role in vivo by binding to the 5'-leader sequence and broadening the substrate specificity of the ribozyme.</text>
</comment>
<comment type="catalytic activity">
    <reaction evidence="1">
        <text>Endonucleolytic cleavage of RNA, removing 5'-extranucleotides from tRNA precursor.</text>
        <dbReference type="EC" id="3.1.26.5"/>
    </reaction>
</comment>
<comment type="subunit">
    <text evidence="1">Consists of a catalytic RNA component (M1 or rnpB) and a protein subunit.</text>
</comment>
<comment type="similarity">
    <text evidence="1">Belongs to the RnpA family.</text>
</comment>
<comment type="sequence caution" evidence="2">
    <conflict type="erroneous initiation">
        <sequence resource="EMBL-CDS" id="SIU02585"/>
    </conflict>
    <text>Extended N-terminus.</text>
</comment>
<accession>P0A5X9</accession>
<accession>A0A1R3Y6Z0</accession>
<accession>O53601</accession>
<accession>Q50789</accession>
<accession>X2BQ52</accession>
<dbReference type="EC" id="3.1.26.5" evidence="1"/>
<dbReference type="EMBL" id="LT708304">
    <property type="protein sequence ID" value="SIU02585.1"/>
    <property type="status" value="ALT_INIT"/>
    <property type="molecule type" value="Genomic_DNA"/>
</dbReference>
<dbReference type="RefSeq" id="NP_857589.2">
    <property type="nucleotide sequence ID" value="NC_002945.3"/>
</dbReference>
<dbReference type="RefSeq" id="WP_003899767.1">
    <property type="nucleotide sequence ID" value="NC_002945.4"/>
</dbReference>
<dbReference type="SMR" id="P0A5X9"/>
<dbReference type="KEGG" id="mbo:BQ2027_MB3954C"/>
<dbReference type="PATRIC" id="fig|233413.5.peg.4332"/>
<dbReference type="Proteomes" id="UP000001419">
    <property type="component" value="Chromosome"/>
</dbReference>
<dbReference type="GO" id="GO:0030677">
    <property type="term" value="C:ribonuclease P complex"/>
    <property type="evidence" value="ECO:0007669"/>
    <property type="project" value="TreeGrafter"/>
</dbReference>
<dbReference type="GO" id="GO:0042781">
    <property type="term" value="F:3'-tRNA processing endoribonuclease activity"/>
    <property type="evidence" value="ECO:0007669"/>
    <property type="project" value="TreeGrafter"/>
</dbReference>
<dbReference type="GO" id="GO:0004526">
    <property type="term" value="F:ribonuclease P activity"/>
    <property type="evidence" value="ECO:0007669"/>
    <property type="project" value="UniProtKB-UniRule"/>
</dbReference>
<dbReference type="GO" id="GO:0000049">
    <property type="term" value="F:tRNA binding"/>
    <property type="evidence" value="ECO:0007669"/>
    <property type="project" value="UniProtKB-UniRule"/>
</dbReference>
<dbReference type="GO" id="GO:0001682">
    <property type="term" value="P:tRNA 5'-leader removal"/>
    <property type="evidence" value="ECO:0007669"/>
    <property type="project" value="UniProtKB-UniRule"/>
</dbReference>
<dbReference type="FunFam" id="3.30.230.10:FF:000135">
    <property type="entry name" value="Ribonuclease P protein component"/>
    <property type="match status" value="1"/>
</dbReference>
<dbReference type="Gene3D" id="3.30.230.10">
    <property type="match status" value="1"/>
</dbReference>
<dbReference type="HAMAP" id="MF_00227">
    <property type="entry name" value="RNase_P"/>
    <property type="match status" value="1"/>
</dbReference>
<dbReference type="InterPro" id="IPR020568">
    <property type="entry name" value="Ribosomal_Su5_D2-typ_SF"/>
</dbReference>
<dbReference type="InterPro" id="IPR014721">
    <property type="entry name" value="Ribsml_uS5_D2-typ_fold_subgr"/>
</dbReference>
<dbReference type="InterPro" id="IPR000100">
    <property type="entry name" value="RNase_P"/>
</dbReference>
<dbReference type="InterPro" id="IPR020539">
    <property type="entry name" value="RNase_P_CS"/>
</dbReference>
<dbReference type="NCBIfam" id="TIGR00188">
    <property type="entry name" value="rnpA"/>
    <property type="match status" value="1"/>
</dbReference>
<dbReference type="PANTHER" id="PTHR33992">
    <property type="entry name" value="RIBONUCLEASE P PROTEIN COMPONENT"/>
    <property type="match status" value="1"/>
</dbReference>
<dbReference type="PANTHER" id="PTHR33992:SF1">
    <property type="entry name" value="RIBONUCLEASE P PROTEIN COMPONENT"/>
    <property type="match status" value="1"/>
</dbReference>
<dbReference type="Pfam" id="PF00825">
    <property type="entry name" value="Ribonuclease_P"/>
    <property type="match status" value="1"/>
</dbReference>
<dbReference type="SUPFAM" id="SSF54211">
    <property type="entry name" value="Ribosomal protein S5 domain 2-like"/>
    <property type="match status" value="1"/>
</dbReference>
<dbReference type="PROSITE" id="PS00648">
    <property type="entry name" value="RIBONUCLEASE_P"/>
    <property type="match status" value="1"/>
</dbReference>
<sequence>MLRARNRMRRSADFETTVKHGMRTVRSDMVVYWWRGSGGGPRVGLIIAKSVGSAVERHRVARRLRHVAGSIVKELHPSDHVVIRALPSSRHVSSARLEQQLRCGLRRAVELAGSDR</sequence>
<keyword id="KW-0255">Endonuclease</keyword>
<keyword id="KW-0378">Hydrolase</keyword>
<keyword id="KW-0540">Nuclease</keyword>
<keyword id="KW-1185">Reference proteome</keyword>
<keyword id="KW-0694">RNA-binding</keyword>
<keyword id="KW-0819">tRNA processing</keyword>
<gene>
    <name evidence="1" type="primary">rnpA</name>
    <name type="ordered locus">BQ2027_MB3954C</name>
</gene>
<reference key="1">
    <citation type="journal article" date="2003" name="Proc. Natl. Acad. Sci. U.S.A.">
        <title>The complete genome sequence of Mycobacterium bovis.</title>
        <authorList>
            <person name="Garnier T."/>
            <person name="Eiglmeier K."/>
            <person name="Camus J.-C."/>
            <person name="Medina N."/>
            <person name="Mansoor H."/>
            <person name="Pryor M."/>
            <person name="Duthoy S."/>
            <person name="Grondin S."/>
            <person name="Lacroix C."/>
            <person name="Monsempe C."/>
            <person name="Simon S."/>
            <person name="Harris B."/>
            <person name="Atkin R."/>
            <person name="Doggett J."/>
            <person name="Mayes R."/>
            <person name="Keating L."/>
            <person name="Wheeler P.R."/>
            <person name="Parkhill J."/>
            <person name="Barrell B.G."/>
            <person name="Cole S.T."/>
            <person name="Gordon S.V."/>
            <person name="Hewinson R.G."/>
        </authorList>
    </citation>
    <scope>NUCLEOTIDE SEQUENCE [LARGE SCALE GENOMIC DNA]</scope>
    <source>
        <strain>ATCC BAA-935 / AF2122/97</strain>
    </source>
</reference>
<reference key="2">
    <citation type="journal article" date="2017" name="Genome Announc.">
        <title>Updated reference genome sequence and annotation of Mycobacterium bovis AF2122/97.</title>
        <authorList>
            <person name="Malone K.M."/>
            <person name="Farrell D."/>
            <person name="Stuber T.P."/>
            <person name="Schubert O.T."/>
            <person name="Aebersold R."/>
            <person name="Robbe-Austerman S."/>
            <person name="Gordon S.V."/>
        </authorList>
    </citation>
    <scope>NUCLEOTIDE SEQUENCE [LARGE SCALE GENOMIC DNA]</scope>
    <scope>GENOME REANNOTATION</scope>
    <source>
        <strain>ATCC BAA-935 / AF2122/97</strain>
    </source>
</reference>
<feature type="chain" id="PRO_0000198495" description="Ribonuclease P protein component">
    <location>
        <begin position="1"/>
        <end position="116"/>
    </location>
</feature>
<organism>
    <name type="scientific">Mycobacterium bovis (strain ATCC BAA-935 / AF2122/97)</name>
    <dbReference type="NCBI Taxonomy" id="233413"/>
    <lineage>
        <taxon>Bacteria</taxon>
        <taxon>Bacillati</taxon>
        <taxon>Actinomycetota</taxon>
        <taxon>Actinomycetes</taxon>
        <taxon>Mycobacteriales</taxon>
        <taxon>Mycobacteriaceae</taxon>
        <taxon>Mycobacterium</taxon>
        <taxon>Mycobacterium tuberculosis complex</taxon>
    </lineage>
</organism>